<reference key="1">
    <citation type="journal article" date="2000" name="Nature">
        <title>The genome sequence of the plant pathogen Xylella fastidiosa.</title>
        <authorList>
            <person name="Simpson A.J.G."/>
            <person name="Reinach F.C."/>
            <person name="Arruda P."/>
            <person name="Abreu F.A."/>
            <person name="Acencio M."/>
            <person name="Alvarenga R."/>
            <person name="Alves L.M.C."/>
            <person name="Araya J.E."/>
            <person name="Baia G.S."/>
            <person name="Baptista C.S."/>
            <person name="Barros M.H."/>
            <person name="Bonaccorsi E.D."/>
            <person name="Bordin S."/>
            <person name="Bove J.M."/>
            <person name="Briones M.R.S."/>
            <person name="Bueno M.R.P."/>
            <person name="Camargo A.A."/>
            <person name="Camargo L.E.A."/>
            <person name="Carraro D.M."/>
            <person name="Carrer H."/>
            <person name="Colauto N.B."/>
            <person name="Colombo C."/>
            <person name="Costa F.F."/>
            <person name="Costa M.C.R."/>
            <person name="Costa-Neto C.M."/>
            <person name="Coutinho L.L."/>
            <person name="Cristofani M."/>
            <person name="Dias-Neto E."/>
            <person name="Docena C."/>
            <person name="El-Dorry H."/>
            <person name="Facincani A.P."/>
            <person name="Ferreira A.J.S."/>
            <person name="Ferreira V.C.A."/>
            <person name="Ferro J.A."/>
            <person name="Fraga J.S."/>
            <person name="Franca S.C."/>
            <person name="Franco M.C."/>
            <person name="Frohme M."/>
            <person name="Furlan L.R."/>
            <person name="Garnier M."/>
            <person name="Goldman G.H."/>
            <person name="Goldman M.H.S."/>
            <person name="Gomes S.L."/>
            <person name="Gruber A."/>
            <person name="Ho P.L."/>
            <person name="Hoheisel J.D."/>
            <person name="Junqueira M.L."/>
            <person name="Kemper E.L."/>
            <person name="Kitajima J.P."/>
            <person name="Krieger J.E."/>
            <person name="Kuramae E.E."/>
            <person name="Laigret F."/>
            <person name="Lambais M.R."/>
            <person name="Leite L.C.C."/>
            <person name="Lemos E.G.M."/>
            <person name="Lemos M.V.F."/>
            <person name="Lopes S.A."/>
            <person name="Lopes C.R."/>
            <person name="Machado J.A."/>
            <person name="Machado M.A."/>
            <person name="Madeira A.M.B.N."/>
            <person name="Madeira H.M.F."/>
            <person name="Marino C.L."/>
            <person name="Marques M.V."/>
            <person name="Martins E.A.L."/>
            <person name="Martins E.M.F."/>
            <person name="Matsukuma A.Y."/>
            <person name="Menck C.F.M."/>
            <person name="Miracca E.C."/>
            <person name="Miyaki C.Y."/>
            <person name="Monteiro-Vitorello C.B."/>
            <person name="Moon D.H."/>
            <person name="Nagai M.A."/>
            <person name="Nascimento A.L.T.O."/>
            <person name="Netto L.E.S."/>
            <person name="Nhani A. Jr."/>
            <person name="Nobrega F.G."/>
            <person name="Nunes L.R."/>
            <person name="Oliveira M.A."/>
            <person name="de Oliveira M.C."/>
            <person name="de Oliveira R.C."/>
            <person name="Palmieri D.A."/>
            <person name="Paris A."/>
            <person name="Peixoto B.R."/>
            <person name="Pereira G.A.G."/>
            <person name="Pereira H.A. Jr."/>
            <person name="Pesquero J.B."/>
            <person name="Quaggio R.B."/>
            <person name="Roberto P.G."/>
            <person name="Rodrigues V."/>
            <person name="de Rosa A.J.M."/>
            <person name="de Rosa V.E. Jr."/>
            <person name="de Sa R.G."/>
            <person name="Santelli R.V."/>
            <person name="Sawasaki H.E."/>
            <person name="da Silva A.C.R."/>
            <person name="da Silva A.M."/>
            <person name="da Silva F.R."/>
            <person name="Silva W.A. Jr."/>
            <person name="da Silveira J.F."/>
            <person name="Silvestri M.L.Z."/>
            <person name="Siqueira W.J."/>
            <person name="de Souza A.A."/>
            <person name="de Souza A.P."/>
            <person name="Terenzi M.F."/>
            <person name="Truffi D."/>
            <person name="Tsai S.M."/>
            <person name="Tsuhako M.H."/>
            <person name="Vallada H."/>
            <person name="Van Sluys M.A."/>
            <person name="Verjovski-Almeida S."/>
            <person name="Vettore A.L."/>
            <person name="Zago M.A."/>
            <person name="Zatz M."/>
            <person name="Meidanis J."/>
            <person name="Setubal J.C."/>
        </authorList>
    </citation>
    <scope>NUCLEOTIDE SEQUENCE [LARGE SCALE GENOMIC DNA]</scope>
    <source>
        <strain>9a5c</strain>
    </source>
</reference>
<proteinExistence type="inferred from homology"/>
<evidence type="ECO:0000255" key="1">
    <source>
        <dbReference type="HAMAP-Rule" id="MF_01033"/>
    </source>
</evidence>
<keyword id="KW-0028">Amino-acid biosynthesis</keyword>
<keyword id="KW-0100">Branched-chain amino acid biosynthesis</keyword>
<keyword id="KW-0963">Cytoplasm</keyword>
<keyword id="KW-0432">Leucine biosynthesis</keyword>
<keyword id="KW-0460">Magnesium</keyword>
<keyword id="KW-0464">Manganese</keyword>
<keyword id="KW-0479">Metal-binding</keyword>
<keyword id="KW-0520">NAD</keyword>
<keyword id="KW-0560">Oxidoreductase</keyword>
<protein>
    <recommendedName>
        <fullName evidence="1">3-isopropylmalate dehydrogenase</fullName>
        <ecNumber evidence="1">1.1.1.85</ecNumber>
    </recommendedName>
    <alternativeName>
        <fullName evidence="1">3-IPM-DH</fullName>
    </alternativeName>
    <alternativeName>
        <fullName evidence="1">Beta-IPM dehydrogenase</fullName>
        <shortName evidence="1">IMDH</shortName>
    </alternativeName>
</protein>
<accession>Q9PAX3</accession>
<dbReference type="EC" id="1.1.1.85" evidence="1"/>
<dbReference type="EMBL" id="AE003849">
    <property type="protein sequence ID" value="AAF85171.1"/>
    <property type="molecule type" value="Genomic_DNA"/>
</dbReference>
<dbReference type="PIR" id="E82564">
    <property type="entry name" value="E82564"/>
</dbReference>
<dbReference type="RefSeq" id="WP_010894818.1">
    <property type="nucleotide sequence ID" value="NC_002488.3"/>
</dbReference>
<dbReference type="SMR" id="Q9PAX3"/>
<dbReference type="STRING" id="160492.XF_2372"/>
<dbReference type="KEGG" id="xfa:XF_2372"/>
<dbReference type="eggNOG" id="COG0473">
    <property type="taxonomic scope" value="Bacteria"/>
</dbReference>
<dbReference type="HOGENOM" id="CLU_031953_0_3_6"/>
<dbReference type="UniPathway" id="UPA00048">
    <property type="reaction ID" value="UER00072"/>
</dbReference>
<dbReference type="Proteomes" id="UP000000812">
    <property type="component" value="Chromosome"/>
</dbReference>
<dbReference type="GO" id="GO:0005829">
    <property type="term" value="C:cytosol"/>
    <property type="evidence" value="ECO:0007669"/>
    <property type="project" value="TreeGrafter"/>
</dbReference>
<dbReference type="GO" id="GO:0003862">
    <property type="term" value="F:3-isopropylmalate dehydrogenase activity"/>
    <property type="evidence" value="ECO:0007669"/>
    <property type="project" value="UniProtKB-UniRule"/>
</dbReference>
<dbReference type="GO" id="GO:0000287">
    <property type="term" value="F:magnesium ion binding"/>
    <property type="evidence" value="ECO:0007669"/>
    <property type="project" value="InterPro"/>
</dbReference>
<dbReference type="GO" id="GO:0051287">
    <property type="term" value="F:NAD binding"/>
    <property type="evidence" value="ECO:0007669"/>
    <property type="project" value="InterPro"/>
</dbReference>
<dbReference type="GO" id="GO:0009098">
    <property type="term" value="P:L-leucine biosynthetic process"/>
    <property type="evidence" value="ECO:0007669"/>
    <property type="project" value="UniProtKB-UniRule"/>
</dbReference>
<dbReference type="FunFam" id="3.40.718.10:FF:000028">
    <property type="entry name" value="3-isopropylmalate dehydrogenase"/>
    <property type="match status" value="1"/>
</dbReference>
<dbReference type="Gene3D" id="3.40.718.10">
    <property type="entry name" value="Isopropylmalate Dehydrogenase"/>
    <property type="match status" value="1"/>
</dbReference>
<dbReference type="HAMAP" id="MF_01033">
    <property type="entry name" value="LeuB_type1"/>
    <property type="match status" value="1"/>
</dbReference>
<dbReference type="InterPro" id="IPR019818">
    <property type="entry name" value="IsoCit/isopropylmalate_DH_CS"/>
</dbReference>
<dbReference type="InterPro" id="IPR024084">
    <property type="entry name" value="IsoPropMal-DH-like_dom"/>
</dbReference>
<dbReference type="InterPro" id="IPR004429">
    <property type="entry name" value="Isopropylmalate_DH"/>
</dbReference>
<dbReference type="NCBIfam" id="TIGR00169">
    <property type="entry name" value="leuB"/>
    <property type="match status" value="1"/>
</dbReference>
<dbReference type="PANTHER" id="PTHR42979">
    <property type="entry name" value="3-ISOPROPYLMALATE DEHYDROGENASE"/>
    <property type="match status" value="1"/>
</dbReference>
<dbReference type="PANTHER" id="PTHR42979:SF1">
    <property type="entry name" value="3-ISOPROPYLMALATE DEHYDROGENASE"/>
    <property type="match status" value="1"/>
</dbReference>
<dbReference type="Pfam" id="PF00180">
    <property type="entry name" value="Iso_dh"/>
    <property type="match status" value="1"/>
</dbReference>
<dbReference type="SMART" id="SM01329">
    <property type="entry name" value="Iso_dh"/>
    <property type="match status" value="1"/>
</dbReference>
<dbReference type="SUPFAM" id="SSF53659">
    <property type="entry name" value="Isocitrate/Isopropylmalate dehydrogenase-like"/>
    <property type="match status" value="1"/>
</dbReference>
<dbReference type="PROSITE" id="PS00470">
    <property type="entry name" value="IDH_IMDH"/>
    <property type="match status" value="1"/>
</dbReference>
<sequence length="357" mass="38299">MSKQILILPGDGIGHEIVAEAVKVLEHVNVRHTLNLRLSFDALGGAAYEKYGSPLADETLARARDADAVLLGAVGGPQWDTIDPALRPERGLLKIRAQLGLFANLRPALLYPQLADASTLKPEVVAGLDILIVRELTGGLYFGQPRGSRISKNGEREAFDTLPYCESEIRRILKVGFEMARLRGKKLCSVDKANVLASSQLWRTVAGEMAKDYPDVTLSHMYVDNAAMQLVRHPKQFDVIVTENMFGDILSDQASMLTGSIGMLPSASLDANNKGMYEPCHGSAPDIAGQGVANPLATILSVAMLLRYSMGHIKTADAIEHAVGVVLDSGLRTADIWSEGMTKVGTVAMGDAVVAAL</sequence>
<comment type="function">
    <text evidence="1">Catalyzes the oxidation of 3-carboxy-2-hydroxy-4-methylpentanoate (3-isopropylmalate) to 3-carboxy-4-methyl-2-oxopentanoate. The product decarboxylates to 4-methyl-2 oxopentanoate.</text>
</comment>
<comment type="catalytic activity">
    <reaction evidence="1">
        <text>(2R,3S)-3-isopropylmalate + NAD(+) = 4-methyl-2-oxopentanoate + CO2 + NADH</text>
        <dbReference type="Rhea" id="RHEA:32271"/>
        <dbReference type="ChEBI" id="CHEBI:16526"/>
        <dbReference type="ChEBI" id="CHEBI:17865"/>
        <dbReference type="ChEBI" id="CHEBI:35121"/>
        <dbReference type="ChEBI" id="CHEBI:57540"/>
        <dbReference type="ChEBI" id="CHEBI:57945"/>
        <dbReference type="EC" id="1.1.1.85"/>
    </reaction>
</comment>
<comment type="cofactor">
    <cofactor evidence="1">
        <name>Mg(2+)</name>
        <dbReference type="ChEBI" id="CHEBI:18420"/>
    </cofactor>
    <cofactor evidence="1">
        <name>Mn(2+)</name>
        <dbReference type="ChEBI" id="CHEBI:29035"/>
    </cofactor>
    <text evidence="1">Binds 1 Mg(2+) or Mn(2+) ion per subunit.</text>
</comment>
<comment type="pathway">
    <text evidence="1">Amino-acid biosynthesis; L-leucine biosynthesis; L-leucine from 3-methyl-2-oxobutanoate: step 3/4.</text>
</comment>
<comment type="subunit">
    <text evidence="1">Homodimer.</text>
</comment>
<comment type="subcellular location">
    <subcellularLocation>
        <location evidence="1">Cytoplasm</location>
    </subcellularLocation>
</comment>
<comment type="similarity">
    <text evidence="1">Belongs to the isocitrate and isopropylmalate dehydrogenases family. LeuB type 1 subfamily.</text>
</comment>
<gene>
    <name evidence="1" type="primary">leuB</name>
    <name type="ordered locus">XF_2372</name>
</gene>
<organism>
    <name type="scientific">Xylella fastidiosa (strain 9a5c)</name>
    <dbReference type="NCBI Taxonomy" id="160492"/>
    <lineage>
        <taxon>Bacteria</taxon>
        <taxon>Pseudomonadati</taxon>
        <taxon>Pseudomonadota</taxon>
        <taxon>Gammaproteobacteria</taxon>
        <taxon>Lysobacterales</taxon>
        <taxon>Lysobacteraceae</taxon>
        <taxon>Xylella</taxon>
    </lineage>
</organism>
<name>LEU3_XYLFA</name>
<feature type="chain" id="PRO_0000083789" description="3-isopropylmalate dehydrogenase">
    <location>
        <begin position="1"/>
        <end position="357"/>
    </location>
</feature>
<feature type="binding site" evidence="1">
    <location>
        <begin position="76"/>
        <end position="89"/>
    </location>
    <ligand>
        <name>NAD(+)</name>
        <dbReference type="ChEBI" id="CHEBI:57540"/>
    </ligand>
</feature>
<feature type="binding site" evidence="1">
    <location>
        <position position="96"/>
    </location>
    <ligand>
        <name>substrate</name>
    </ligand>
</feature>
<feature type="binding site" evidence="1">
    <location>
        <position position="106"/>
    </location>
    <ligand>
        <name>substrate</name>
    </ligand>
</feature>
<feature type="binding site" evidence="1">
    <location>
        <position position="134"/>
    </location>
    <ligand>
        <name>substrate</name>
    </ligand>
</feature>
<feature type="binding site" evidence="1">
    <location>
        <position position="224"/>
    </location>
    <ligand>
        <name>Mg(2+)</name>
        <dbReference type="ChEBI" id="CHEBI:18420"/>
    </ligand>
</feature>
<feature type="binding site" evidence="1">
    <location>
        <position position="224"/>
    </location>
    <ligand>
        <name>substrate</name>
    </ligand>
</feature>
<feature type="binding site" evidence="1">
    <location>
        <position position="248"/>
    </location>
    <ligand>
        <name>Mg(2+)</name>
        <dbReference type="ChEBI" id="CHEBI:18420"/>
    </ligand>
</feature>
<feature type="binding site" evidence="1">
    <location>
        <position position="252"/>
    </location>
    <ligand>
        <name>Mg(2+)</name>
        <dbReference type="ChEBI" id="CHEBI:18420"/>
    </ligand>
</feature>
<feature type="binding site" evidence="1">
    <location>
        <begin position="282"/>
        <end position="294"/>
    </location>
    <ligand>
        <name>NAD(+)</name>
        <dbReference type="ChEBI" id="CHEBI:57540"/>
    </ligand>
</feature>
<feature type="site" description="Important for catalysis" evidence="1">
    <location>
        <position position="141"/>
    </location>
</feature>
<feature type="site" description="Important for catalysis" evidence="1">
    <location>
        <position position="192"/>
    </location>
</feature>